<comment type="function">
    <text evidence="1">This protein is located at the 30S-50S ribosomal subunit interface and may play a role in the structure and function of the aminoacyl-tRNA binding site.</text>
</comment>
<comment type="similarity">
    <text evidence="1">Belongs to the bacterial ribosomal protein bL19 family.</text>
</comment>
<feature type="chain" id="PRO_0000252542" description="Large ribosomal subunit protein bL19">
    <location>
        <begin position="1"/>
        <end position="118"/>
    </location>
</feature>
<reference key="1">
    <citation type="journal article" date="2005" name="Proc. Natl. Acad. Sci. U.S.A.">
        <title>The genome of Salinibacter ruber: convergence and gene exchange among hyperhalophilic bacteria and archaea.</title>
        <authorList>
            <person name="Mongodin E.F."/>
            <person name="Nelson K.E."/>
            <person name="Daugherty S."/>
            <person name="DeBoy R.T."/>
            <person name="Wister J."/>
            <person name="Khouri H."/>
            <person name="Weidman J."/>
            <person name="Walsh D.A."/>
            <person name="Papke R.T."/>
            <person name="Sanchez Perez G."/>
            <person name="Sharma A.K."/>
            <person name="Nesbo C.L."/>
            <person name="MacLeod D."/>
            <person name="Bapteste E."/>
            <person name="Doolittle W.F."/>
            <person name="Charlebois R.L."/>
            <person name="Legault B."/>
            <person name="Rodriguez-Valera F."/>
        </authorList>
    </citation>
    <scope>NUCLEOTIDE SEQUENCE [LARGE SCALE GENOMIC DNA]</scope>
    <source>
        <strain>DSM 13855 / CECT 5946 / M31</strain>
    </source>
</reference>
<sequence length="118" mass="13087">MATDLMSVVEATQLRDDVPDFDSGDTVNVHLRVVEGEKERIQQFEGVCLSRRGSGPNETITVRKVSEGVGVERIFPVHSPRVAQIDVVRRGAVNRSKLSYLRGLSGKDARIQEQIRGN</sequence>
<dbReference type="EMBL" id="CP000159">
    <property type="protein sequence ID" value="ABC45208.1"/>
    <property type="molecule type" value="Genomic_DNA"/>
</dbReference>
<dbReference type="RefSeq" id="WP_011404372.1">
    <property type="nucleotide sequence ID" value="NC_007677.1"/>
</dbReference>
<dbReference type="RefSeq" id="YP_445746.1">
    <property type="nucleotide sequence ID" value="NC_007677.1"/>
</dbReference>
<dbReference type="SMR" id="Q2S235"/>
<dbReference type="STRING" id="309807.SRU_1626"/>
<dbReference type="EnsemblBacteria" id="ABC45208">
    <property type="protein sequence ID" value="ABC45208"/>
    <property type="gene ID" value="SRU_1626"/>
</dbReference>
<dbReference type="GeneID" id="83728544"/>
<dbReference type="KEGG" id="sru:SRU_1626"/>
<dbReference type="PATRIC" id="fig|309807.25.peg.1687"/>
<dbReference type="eggNOG" id="COG0335">
    <property type="taxonomic scope" value="Bacteria"/>
</dbReference>
<dbReference type="HOGENOM" id="CLU_103507_2_1_10"/>
<dbReference type="OrthoDB" id="9803541at2"/>
<dbReference type="Proteomes" id="UP000008674">
    <property type="component" value="Chromosome"/>
</dbReference>
<dbReference type="GO" id="GO:0022625">
    <property type="term" value="C:cytosolic large ribosomal subunit"/>
    <property type="evidence" value="ECO:0007669"/>
    <property type="project" value="TreeGrafter"/>
</dbReference>
<dbReference type="GO" id="GO:0003735">
    <property type="term" value="F:structural constituent of ribosome"/>
    <property type="evidence" value="ECO:0007669"/>
    <property type="project" value="InterPro"/>
</dbReference>
<dbReference type="GO" id="GO:0006412">
    <property type="term" value="P:translation"/>
    <property type="evidence" value="ECO:0007669"/>
    <property type="project" value="UniProtKB-UniRule"/>
</dbReference>
<dbReference type="FunFam" id="2.30.30.790:FF:000001">
    <property type="entry name" value="50S ribosomal protein L19"/>
    <property type="match status" value="1"/>
</dbReference>
<dbReference type="Gene3D" id="2.30.30.790">
    <property type="match status" value="1"/>
</dbReference>
<dbReference type="HAMAP" id="MF_00402">
    <property type="entry name" value="Ribosomal_bL19"/>
    <property type="match status" value="1"/>
</dbReference>
<dbReference type="InterPro" id="IPR001857">
    <property type="entry name" value="Ribosomal_bL19"/>
</dbReference>
<dbReference type="InterPro" id="IPR018257">
    <property type="entry name" value="Ribosomal_bL19_CS"/>
</dbReference>
<dbReference type="InterPro" id="IPR038657">
    <property type="entry name" value="Ribosomal_bL19_sf"/>
</dbReference>
<dbReference type="InterPro" id="IPR008991">
    <property type="entry name" value="Translation_prot_SH3-like_sf"/>
</dbReference>
<dbReference type="NCBIfam" id="TIGR01024">
    <property type="entry name" value="rplS_bact"/>
    <property type="match status" value="1"/>
</dbReference>
<dbReference type="PANTHER" id="PTHR15680:SF9">
    <property type="entry name" value="LARGE RIBOSOMAL SUBUNIT PROTEIN BL19M"/>
    <property type="match status" value="1"/>
</dbReference>
<dbReference type="PANTHER" id="PTHR15680">
    <property type="entry name" value="RIBOSOMAL PROTEIN L19"/>
    <property type="match status" value="1"/>
</dbReference>
<dbReference type="Pfam" id="PF01245">
    <property type="entry name" value="Ribosomal_L19"/>
    <property type="match status" value="1"/>
</dbReference>
<dbReference type="PIRSF" id="PIRSF002191">
    <property type="entry name" value="Ribosomal_L19"/>
    <property type="match status" value="1"/>
</dbReference>
<dbReference type="PRINTS" id="PR00061">
    <property type="entry name" value="RIBOSOMALL19"/>
</dbReference>
<dbReference type="SUPFAM" id="SSF50104">
    <property type="entry name" value="Translation proteins SH3-like domain"/>
    <property type="match status" value="1"/>
</dbReference>
<dbReference type="PROSITE" id="PS01015">
    <property type="entry name" value="RIBOSOMAL_L19"/>
    <property type="match status" value="1"/>
</dbReference>
<evidence type="ECO:0000255" key="1">
    <source>
        <dbReference type="HAMAP-Rule" id="MF_00402"/>
    </source>
</evidence>
<evidence type="ECO:0000305" key="2"/>
<name>RL19_SALRD</name>
<organism>
    <name type="scientific">Salinibacter ruber (strain DSM 13855 / M31)</name>
    <dbReference type="NCBI Taxonomy" id="309807"/>
    <lineage>
        <taxon>Bacteria</taxon>
        <taxon>Pseudomonadati</taxon>
        <taxon>Rhodothermota</taxon>
        <taxon>Rhodothermia</taxon>
        <taxon>Rhodothermales</taxon>
        <taxon>Salinibacteraceae</taxon>
        <taxon>Salinibacter</taxon>
    </lineage>
</organism>
<protein>
    <recommendedName>
        <fullName evidence="1">Large ribosomal subunit protein bL19</fullName>
    </recommendedName>
    <alternativeName>
        <fullName evidence="2">50S ribosomal protein L19</fullName>
    </alternativeName>
</protein>
<gene>
    <name evidence="1" type="primary">rplS</name>
    <name type="ordered locus">SRU_1626</name>
</gene>
<accession>Q2S235</accession>
<keyword id="KW-1185">Reference proteome</keyword>
<keyword id="KW-0687">Ribonucleoprotein</keyword>
<keyword id="KW-0689">Ribosomal protein</keyword>
<proteinExistence type="inferred from homology"/>